<reference evidence="7" key="1">
    <citation type="journal article" date="2000" name="Science">
        <title>The genome sequence of Drosophila melanogaster.</title>
        <authorList>
            <person name="Adams M.D."/>
            <person name="Celniker S.E."/>
            <person name="Holt R.A."/>
            <person name="Evans C.A."/>
            <person name="Gocayne J.D."/>
            <person name="Amanatides P.G."/>
            <person name="Scherer S.E."/>
            <person name="Li P.W."/>
            <person name="Hoskins R.A."/>
            <person name="Galle R.F."/>
            <person name="George R.A."/>
            <person name="Lewis S.E."/>
            <person name="Richards S."/>
            <person name="Ashburner M."/>
            <person name="Henderson S.N."/>
            <person name="Sutton G.G."/>
            <person name="Wortman J.R."/>
            <person name="Yandell M.D."/>
            <person name="Zhang Q."/>
            <person name="Chen L.X."/>
            <person name="Brandon R.C."/>
            <person name="Rogers Y.-H.C."/>
            <person name="Blazej R.G."/>
            <person name="Champe M."/>
            <person name="Pfeiffer B.D."/>
            <person name="Wan K.H."/>
            <person name="Doyle C."/>
            <person name="Baxter E.G."/>
            <person name="Helt G."/>
            <person name="Nelson C.R."/>
            <person name="Miklos G.L.G."/>
            <person name="Abril J.F."/>
            <person name="Agbayani A."/>
            <person name="An H.-J."/>
            <person name="Andrews-Pfannkoch C."/>
            <person name="Baldwin D."/>
            <person name="Ballew R.M."/>
            <person name="Basu A."/>
            <person name="Baxendale J."/>
            <person name="Bayraktaroglu L."/>
            <person name="Beasley E.M."/>
            <person name="Beeson K.Y."/>
            <person name="Benos P.V."/>
            <person name="Berman B.P."/>
            <person name="Bhandari D."/>
            <person name="Bolshakov S."/>
            <person name="Borkova D."/>
            <person name="Botchan M.R."/>
            <person name="Bouck J."/>
            <person name="Brokstein P."/>
            <person name="Brottier P."/>
            <person name="Burtis K.C."/>
            <person name="Busam D.A."/>
            <person name="Butler H."/>
            <person name="Cadieu E."/>
            <person name="Center A."/>
            <person name="Chandra I."/>
            <person name="Cherry J.M."/>
            <person name="Cawley S."/>
            <person name="Dahlke C."/>
            <person name="Davenport L.B."/>
            <person name="Davies P."/>
            <person name="de Pablos B."/>
            <person name="Delcher A."/>
            <person name="Deng Z."/>
            <person name="Mays A.D."/>
            <person name="Dew I."/>
            <person name="Dietz S.M."/>
            <person name="Dodson K."/>
            <person name="Doup L.E."/>
            <person name="Downes M."/>
            <person name="Dugan-Rocha S."/>
            <person name="Dunkov B.C."/>
            <person name="Dunn P."/>
            <person name="Durbin K.J."/>
            <person name="Evangelista C.C."/>
            <person name="Ferraz C."/>
            <person name="Ferriera S."/>
            <person name="Fleischmann W."/>
            <person name="Fosler C."/>
            <person name="Gabrielian A.E."/>
            <person name="Garg N.S."/>
            <person name="Gelbart W.M."/>
            <person name="Glasser K."/>
            <person name="Glodek A."/>
            <person name="Gong F."/>
            <person name="Gorrell J.H."/>
            <person name="Gu Z."/>
            <person name="Guan P."/>
            <person name="Harris M."/>
            <person name="Harris N.L."/>
            <person name="Harvey D.A."/>
            <person name="Heiman T.J."/>
            <person name="Hernandez J.R."/>
            <person name="Houck J."/>
            <person name="Hostin D."/>
            <person name="Houston K.A."/>
            <person name="Howland T.J."/>
            <person name="Wei M.-H."/>
            <person name="Ibegwam C."/>
            <person name="Jalali M."/>
            <person name="Kalush F."/>
            <person name="Karpen G.H."/>
            <person name="Ke Z."/>
            <person name="Kennison J.A."/>
            <person name="Ketchum K.A."/>
            <person name="Kimmel B.E."/>
            <person name="Kodira C.D."/>
            <person name="Kraft C.L."/>
            <person name="Kravitz S."/>
            <person name="Kulp D."/>
            <person name="Lai Z."/>
            <person name="Lasko P."/>
            <person name="Lei Y."/>
            <person name="Levitsky A.A."/>
            <person name="Li J.H."/>
            <person name="Li Z."/>
            <person name="Liang Y."/>
            <person name="Lin X."/>
            <person name="Liu X."/>
            <person name="Mattei B."/>
            <person name="McIntosh T.C."/>
            <person name="McLeod M.P."/>
            <person name="McPherson D."/>
            <person name="Merkulov G."/>
            <person name="Milshina N.V."/>
            <person name="Mobarry C."/>
            <person name="Morris J."/>
            <person name="Moshrefi A."/>
            <person name="Mount S.M."/>
            <person name="Moy M."/>
            <person name="Murphy B."/>
            <person name="Murphy L."/>
            <person name="Muzny D.M."/>
            <person name="Nelson D.L."/>
            <person name="Nelson D.R."/>
            <person name="Nelson K.A."/>
            <person name="Nixon K."/>
            <person name="Nusskern D.R."/>
            <person name="Pacleb J.M."/>
            <person name="Palazzolo M."/>
            <person name="Pittman G.S."/>
            <person name="Pan S."/>
            <person name="Pollard J."/>
            <person name="Puri V."/>
            <person name="Reese M.G."/>
            <person name="Reinert K."/>
            <person name="Remington K."/>
            <person name="Saunders R.D.C."/>
            <person name="Scheeler F."/>
            <person name="Shen H."/>
            <person name="Shue B.C."/>
            <person name="Siden-Kiamos I."/>
            <person name="Simpson M."/>
            <person name="Skupski M.P."/>
            <person name="Smith T.J."/>
            <person name="Spier E."/>
            <person name="Spradling A.C."/>
            <person name="Stapleton M."/>
            <person name="Strong R."/>
            <person name="Sun E."/>
            <person name="Svirskas R."/>
            <person name="Tector C."/>
            <person name="Turner R."/>
            <person name="Venter E."/>
            <person name="Wang A.H."/>
            <person name="Wang X."/>
            <person name="Wang Z.-Y."/>
            <person name="Wassarman D.A."/>
            <person name="Weinstock G.M."/>
            <person name="Weissenbach J."/>
            <person name="Williams S.M."/>
            <person name="Woodage T."/>
            <person name="Worley K.C."/>
            <person name="Wu D."/>
            <person name="Yang S."/>
            <person name="Yao Q.A."/>
            <person name="Ye J."/>
            <person name="Yeh R.-F."/>
            <person name="Zaveri J.S."/>
            <person name="Zhan M."/>
            <person name="Zhang G."/>
            <person name="Zhao Q."/>
            <person name="Zheng L."/>
            <person name="Zheng X.H."/>
            <person name="Zhong F.N."/>
            <person name="Zhong W."/>
            <person name="Zhou X."/>
            <person name="Zhu S.C."/>
            <person name="Zhu X."/>
            <person name="Smith H.O."/>
            <person name="Gibbs R.A."/>
            <person name="Myers E.W."/>
            <person name="Rubin G.M."/>
            <person name="Venter J.C."/>
        </authorList>
    </citation>
    <scope>NUCLEOTIDE SEQUENCE [LARGE SCALE GENOMIC DNA]</scope>
    <source>
        <strain evidence="3">Berkeley</strain>
    </source>
</reference>
<reference evidence="6 7" key="2">
    <citation type="journal article" date="2002" name="Genome Biol.">
        <title>Annotation of the Drosophila melanogaster euchromatic genome: a systematic review.</title>
        <authorList>
            <person name="Misra S."/>
            <person name="Crosby M.A."/>
            <person name="Mungall C.J."/>
            <person name="Matthews B.B."/>
            <person name="Campbell K.S."/>
            <person name="Hradecky P."/>
            <person name="Huang Y."/>
            <person name="Kaminker J.S."/>
            <person name="Millburn G.H."/>
            <person name="Prochnik S.E."/>
            <person name="Smith C.D."/>
            <person name="Tupy J.L."/>
            <person name="Whitfield E.J."/>
            <person name="Bayraktaroglu L."/>
            <person name="Berman B.P."/>
            <person name="Bettencourt B.R."/>
            <person name="Celniker S.E."/>
            <person name="de Grey A.D.N.J."/>
            <person name="Drysdale R.A."/>
            <person name="Harris N.L."/>
            <person name="Richter J."/>
            <person name="Russo S."/>
            <person name="Schroeder A.J."/>
            <person name="Shu S.Q."/>
            <person name="Stapleton M."/>
            <person name="Yamada C."/>
            <person name="Ashburner M."/>
            <person name="Gelbart W.M."/>
            <person name="Rubin G.M."/>
            <person name="Lewis S.E."/>
        </authorList>
    </citation>
    <scope>GENOME REANNOTATION</scope>
    <source>
        <strain>Berkeley</strain>
    </source>
</reference>
<reference evidence="6 8" key="3">
    <citation type="journal article" date="2002" name="Genome Biol.">
        <title>A Drosophila full-length cDNA resource.</title>
        <authorList>
            <person name="Stapleton M."/>
            <person name="Carlson J.W."/>
            <person name="Brokstein P."/>
            <person name="Yu C."/>
            <person name="Champe M."/>
            <person name="George R.A."/>
            <person name="Guarin H."/>
            <person name="Kronmiller B."/>
            <person name="Pacleb J.M."/>
            <person name="Park S."/>
            <person name="Wan K.H."/>
            <person name="Rubin G.M."/>
            <person name="Celniker S.E."/>
        </authorList>
    </citation>
    <scope>NUCLEOTIDE SEQUENCE [LARGE SCALE MRNA]</scope>
    <scope>RNA EDITING OF POSITION 345</scope>
    <source>
        <strain evidence="8">Berkeley</strain>
        <tissue evidence="4">Head</tissue>
    </source>
</reference>
<reference evidence="6" key="4">
    <citation type="journal article" date="2006" name="RNA">
        <title>RNA editing in Drosophila melanogaster: new targets and functional consequences.</title>
        <authorList>
            <person name="Stapleton M."/>
            <person name="Carlson J.W."/>
            <person name="Celniker S.E."/>
        </authorList>
    </citation>
    <scope>RNA EDITING OF POSITION 345</scope>
</reference>
<keyword id="KW-1185">Reference proteome</keyword>
<keyword id="KW-0691">RNA editing</keyword>
<sequence length="709" mass="76765">MPSLRQKVTTYFRQLSFIAEPREGRRRASEHEDDDGSFITKYLEGRMQRQFVEGPEIYNGQNPTDMPVLKLDTYEAGNCSITAACTGPDEGLTGIKRSKLHLSTSFADDIDFIDTQQENDDCYGVRRSTPPVQVATQNSTRLTSKFGRPPAGPRRQSSAEQPSGSASASGMRSRKNSKSSIANLAAASAGTDAGKANSDQNNRNVLNAKTEVSTDGDPNSERERLLREAVSNQGGSDPAALIAGVENWRMECDFAYGISVSLYETNMLTKEPMGNPIADCYGMVVRGDSAAMAMADGVNWGDGARLAARSAVHGCLDYLDRAVFGQALECRATTTQEVFVSLLRSLWEGHGCILEVGGALSTLTIAVVLPLDGAPGKYVVCSCNVGDSLGYVYSKKHGVRELTQASHDISSMRDMRDALGALGPADGNKPELSNLTFSMTCIESGDIVFLTSDGISDNFDPVVGKFAEAWTPDVKLQTSGHVKPANLAPKRQNKSASAIYARLHPSTPPTRPARQSKAESPPNNAPSRPKYMRSQTLIEPRQGLVSAPPPSVVPQRIPKSISGLPLVTGPQRHALTLYRLEDLLSYGINGTFSPCVSARRLCHLLIDFVRMITSARRKTLEQRELFYKLSTGPDGAKREVQLNRMQHRAARKRVVDSSAFVALPGKLDHATVMAYTVGGGEEHNNGNENGDGGAISPVLQSKEFKETNF</sequence>
<name>Y9801_DROME</name>
<comment type="RNA editing">
    <location>
        <position position="345" evidence="4 5"/>
    </location>
    <text evidence="5">Partially edited. Target of Adar.</text>
</comment>
<evidence type="ECO:0000255" key="1">
    <source>
        <dbReference type="PROSITE-ProRule" id="PRU01082"/>
    </source>
</evidence>
<evidence type="ECO:0000256" key="2">
    <source>
        <dbReference type="SAM" id="MobiDB-lite"/>
    </source>
</evidence>
<evidence type="ECO:0000269" key="3">
    <source>
    </source>
</evidence>
<evidence type="ECO:0000269" key="4">
    <source>
    </source>
</evidence>
<evidence type="ECO:0000269" key="5">
    <source>
    </source>
</evidence>
<evidence type="ECO:0000305" key="6"/>
<evidence type="ECO:0000312" key="7">
    <source>
        <dbReference type="EMBL" id="AAF54282.1"/>
    </source>
</evidence>
<evidence type="ECO:0000312" key="8">
    <source>
        <dbReference type="EMBL" id="AAL90252.1"/>
    </source>
</evidence>
<gene>
    <name type="ORF">CG9801</name>
</gene>
<feature type="chain" id="PRO_0000337167" description="PP2C-like domain-containing protein CG9801">
    <location>
        <begin position="1"/>
        <end position="709"/>
    </location>
</feature>
<feature type="domain" description="PPM-type phosphatase" evidence="1">
    <location>
        <begin position="259"/>
        <end position="503"/>
    </location>
</feature>
<feature type="region of interest" description="Disordered" evidence="2">
    <location>
        <begin position="121"/>
        <end position="222"/>
    </location>
</feature>
<feature type="region of interest" description="Disordered" evidence="2">
    <location>
        <begin position="503"/>
        <end position="530"/>
    </location>
</feature>
<feature type="region of interest" description="Disordered" evidence="2">
    <location>
        <begin position="678"/>
        <end position="709"/>
    </location>
</feature>
<feature type="compositionally biased region" description="Polar residues" evidence="2">
    <location>
        <begin position="130"/>
        <end position="143"/>
    </location>
</feature>
<feature type="compositionally biased region" description="Low complexity" evidence="2">
    <location>
        <begin position="182"/>
        <end position="196"/>
    </location>
</feature>
<feature type="compositionally biased region" description="Polar residues" evidence="2">
    <location>
        <begin position="197"/>
        <end position="217"/>
    </location>
</feature>
<feature type="sequence variant" description="In RNA edited version." evidence="5">
    <original>S</original>
    <variation>G</variation>
    <location>
        <position position="345"/>
    </location>
</feature>
<protein>
    <recommendedName>
        <fullName>PP2C-like domain-containing protein CG9801</fullName>
    </recommendedName>
</protein>
<dbReference type="EMBL" id="AE014297">
    <property type="protein sequence ID" value="AAF54282.1"/>
    <property type="molecule type" value="Genomic_DNA"/>
</dbReference>
<dbReference type="EMBL" id="AE014297">
    <property type="protein sequence ID" value="AAS65127.1"/>
    <property type="molecule type" value="Genomic_DNA"/>
</dbReference>
<dbReference type="EMBL" id="AY089514">
    <property type="protein sequence ID" value="AAL90252.1"/>
    <property type="molecule type" value="mRNA"/>
</dbReference>
<dbReference type="RefSeq" id="NP_649827.2">
    <property type="nucleotide sequence ID" value="NM_141570.3"/>
</dbReference>
<dbReference type="RefSeq" id="NP_731278.1">
    <property type="nucleotide sequence ID" value="NM_169239.1"/>
</dbReference>
<dbReference type="RefSeq" id="NP_996184.1">
    <property type="nucleotide sequence ID" value="NM_206462.2"/>
</dbReference>
<dbReference type="SMR" id="Q0KIA2"/>
<dbReference type="BioGRID" id="66219">
    <property type="interactions" value="1"/>
</dbReference>
<dbReference type="FunCoup" id="Q0KIA2">
    <property type="interactions" value="1"/>
</dbReference>
<dbReference type="IntAct" id="Q0KIA2">
    <property type="interactions" value="1"/>
</dbReference>
<dbReference type="STRING" id="7227.FBpp0081426"/>
<dbReference type="PaxDb" id="7227-FBpp0081426"/>
<dbReference type="DNASU" id="41044"/>
<dbReference type="EnsemblMetazoa" id="FBtr0081944">
    <property type="protein sequence ID" value="FBpp0081426"/>
    <property type="gene ID" value="FBgn0037623"/>
</dbReference>
<dbReference type="EnsemblMetazoa" id="FBtr0081945">
    <property type="protein sequence ID" value="FBpp0081427"/>
    <property type="gene ID" value="FBgn0037623"/>
</dbReference>
<dbReference type="EnsemblMetazoa" id="FBtr0081946">
    <property type="protein sequence ID" value="FBpp0088976"/>
    <property type="gene ID" value="FBgn0037623"/>
</dbReference>
<dbReference type="GeneID" id="41044"/>
<dbReference type="KEGG" id="dme:Dmel_CG9801"/>
<dbReference type="UCSC" id="CG9801-RA">
    <property type="organism name" value="d. melanogaster"/>
</dbReference>
<dbReference type="AGR" id="FB:FBgn0037623"/>
<dbReference type="FlyBase" id="FBgn0037623">
    <property type="gene designation" value="CG9801"/>
</dbReference>
<dbReference type="VEuPathDB" id="VectorBase:FBgn0037623"/>
<dbReference type="eggNOG" id="ENOG502QTP9">
    <property type="taxonomic scope" value="Eukaryota"/>
</dbReference>
<dbReference type="GeneTree" id="ENSGT00520000060965"/>
<dbReference type="HOGENOM" id="CLU_016863_0_0_1"/>
<dbReference type="InParanoid" id="Q0KIA2"/>
<dbReference type="OMA" id="FSMSCIE"/>
<dbReference type="OrthoDB" id="2556847at2759"/>
<dbReference type="PhylomeDB" id="Q0KIA2"/>
<dbReference type="BioGRID-ORCS" id="41044">
    <property type="hits" value="0 hits in 1 CRISPR screen"/>
</dbReference>
<dbReference type="ChiTaRS" id="CG9801">
    <property type="organism name" value="fly"/>
</dbReference>
<dbReference type="GenomeRNAi" id="41044"/>
<dbReference type="PRO" id="PR:Q0KIA2"/>
<dbReference type="Proteomes" id="UP000000803">
    <property type="component" value="Chromosome 3R"/>
</dbReference>
<dbReference type="Bgee" id="FBgn0037623">
    <property type="expression patterns" value="Expressed in adult middle midgut class II enteroendocrine cell in adult midgut (Drosophila) and 133 other cell types or tissues"/>
</dbReference>
<dbReference type="ExpressionAtlas" id="Q0KIA2">
    <property type="expression patterns" value="baseline and differential"/>
</dbReference>
<dbReference type="Gene3D" id="3.60.40.10">
    <property type="entry name" value="PPM-type phosphatase domain"/>
    <property type="match status" value="1"/>
</dbReference>
<dbReference type="InterPro" id="IPR053287">
    <property type="entry name" value="PP2C-like_domain"/>
</dbReference>
<dbReference type="InterPro" id="IPR036457">
    <property type="entry name" value="PPM-type-like_dom_sf"/>
</dbReference>
<dbReference type="InterPro" id="IPR001932">
    <property type="entry name" value="PPM-type_phosphatase-like_dom"/>
</dbReference>
<dbReference type="PANTHER" id="PTHR21586:SF0">
    <property type="entry name" value="PP2C-LIKE DOMAIN-CONTAINING PROTEIN CG9801"/>
    <property type="match status" value="1"/>
</dbReference>
<dbReference type="PANTHER" id="PTHR21586">
    <property type="entry name" value="TIPA"/>
    <property type="match status" value="1"/>
</dbReference>
<dbReference type="Pfam" id="PF13672">
    <property type="entry name" value="PP2C_2"/>
    <property type="match status" value="1"/>
</dbReference>
<dbReference type="SUPFAM" id="SSF81606">
    <property type="entry name" value="PP2C-like"/>
    <property type="match status" value="1"/>
</dbReference>
<dbReference type="PROSITE" id="PS51746">
    <property type="entry name" value="PPM_2"/>
    <property type="match status" value="1"/>
</dbReference>
<organism>
    <name type="scientific">Drosophila melanogaster</name>
    <name type="common">Fruit fly</name>
    <dbReference type="NCBI Taxonomy" id="7227"/>
    <lineage>
        <taxon>Eukaryota</taxon>
        <taxon>Metazoa</taxon>
        <taxon>Ecdysozoa</taxon>
        <taxon>Arthropoda</taxon>
        <taxon>Hexapoda</taxon>
        <taxon>Insecta</taxon>
        <taxon>Pterygota</taxon>
        <taxon>Neoptera</taxon>
        <taxon>Endopterygota</taxon>
        <taxon>Diptera</taxon>
        <taxon>Brachycera</taxon>
        <taxon>Muscomorpha</taxon>
        <taxon>Ephydroidea</taxon>
        <taxon>Drosophilidae</taxon>
        <taxon>Drosophila</taxon>
        <taxon>Sophophora</taxon>
    </lineage>
</organism>
<proteinExistence type="evidence at transcript level"/>
<accession>Q0KIA2</accession>
<accession>Q8SXN8</accession>